<organism>
    <name type="scientific">Schizosaccharomyces pombe (strain 972 / ATCC 24843)</name>
    <name type="common">Fission yeast</name>
    <dbReference type="NCBI Taxonomy" id="284812"/>
    <lineage>
        <taxon>Eukaryota</taxon>
        <taxon>Fungi</taxon>
        <taxon>Dikarya</taxon>
        <taxon>Ascomycota</taxon>
        <taxon>Taphrinomycotina</taxon>
        <taxon>Schizosaccharomycetes</taxon>
        <taxon>Schizosaccharomycetales</taxon>
        <taxon>Schizosaccharomycetaceae</taxon>
        <taxon>Schizosaccharomyces</taxon>
    </lineage>
</organism>
<protein>
    <recommendedName>
        <fullName>Uncharacterized methyltransferase C977.03</fullName>
        <ecNumber>2.1.1.-</ecNumber>
    </recommendedName>
</protein>
<accession>Q9P7U5</accession>
<evidence type="ECO:0000250" key="1"/>
<evidence type="ECO:0000305" key="2"/>
<feature type="chain" id="PRO_0000339152" description="Uncharacterized methyltransferase C977.03">
    <location>
        <begin position="1"/>
        <end position="145"/>
    </location>
</feature>
<comment type="function">
    <text evidence="1">Probable methyltransferase.</text>
</comment>
<comment type="similarity">
    <text evidence="2">Belongs to the methyltransferase superfamily.</text>
</comment>
<dbReference type="EC" id="2.1.1.-"/>
<dbReference type="EMBL" id="CU329670">
    <property type="protein sequence ID" value="CAB69625.1"/>
    <property type="molecule type" value="Genomic_DNA"/>
</dbReference>
<dbReference type="PIR" id="T50276">
    <property type="entry name" value="T50276"/>
</dbReference>
<dbReference type="RefSeq" id="NP_592776.1">
    <property type="nucleotide sequence ID" value="NM_001018176.1"/>
</dbReference>
<dbReference type="SMR" id="Q9P7U5"/>
<dbReference type="FunCoup" id="Q9P7U5">
    <property type="interactions" value="197"/>
</dbReference>
<dbReference type="PaxDb" id="4896-SPAC977.03.1"/>
<dbReference type="EnsemblFungi" id="SPAC977.03.1">
    <property type="protein sequence ID" value="SPAC977.03.1:pep"/>
    <property type="gene ID" value="SPAC977.03"/>
</dbReference>
<dbReference type="KEGG" id="spo:2543345"/>
<dbReference type="PomBase" id="SPAC977.03"/>
<dbReference type="VEuPathDB" id="FungiDB:SPAC977.03"/>
<dbReference type="HOGENOM" id="CLU_1787942_0_0_1"/>
<dbReference type="InParanoid" id="Q9P7U5"/>
<dbReference type="PhylomeDB" id="Q9P7U5"/>
<dbReference type="PRO" id="PR:Q9P7U5"/>
<dbReference type="Proteomes" id="UP000002485">
    <property type="component" value="Chromosome I"/>
</dbReference>
<dbReference type="GO" id="GO:0008168">
    <property type="term" value="F:methyltransferase activity"/>
    <property type="evidence" value="ECO:0000318"/>
    <property type="project" value="GO_Central"/>
</dbReference>
<dbReference type="GO" id="GO:0032259">
    <property type="term" value="P:methylation"/>
    <property type="evidence" value="ECO:0007669"/>
    <property type="project" value="UniProtKB-KW"/>
</dbReference>
<dbReference type="CDD" id="cd02440">
    <property type="entry name" value="AdoMet_MTases"/>
    <property type="match status" value="1"/>
</dbReference>
<dbReference type="Gene3D" id="3.40.50.150">
    <property type="entry name" value="Vaccinia Virus protein VP39"/>
    <property type="match status" value="1"/>
</dbReference>
<dbReference type="InterPro" id="IPR041698">
    <property type="entry name" value="Methyltransf_25"/>
</dbReference>
<dbReference type="InterPro" id="IPR029063">
    <property type="entry name" value="SAM-dependent_MTases_sf"/>
</dbReference>
<dbReference type="Pfam" id="PF13649">
    <property type="entry name" value="Methyltransf_25"/>
    <property type="match status" value="1"/>
</dbReference>
<dbReference type="SUPFAM" id="SSF53335">
    <property type="entry name" value="S-adenosyl-L-methionine-dependent methyltransferases"/>
    <property type="match status" value="1"/>
</dbReference>
<keyword id="KW-0489">Methyltransferase</keyword>
<keyword id="KW-1185">Reference proteome</keyword>
<keyword id="KW-0808">Transferase</keyword>
<sequence length="145" mass="16548">MNLVQLGKLHENVLDAGCEPNRNARYLASLGYKVVGIDISERAISKAIDKTSSEKSNVNFNQRDFSRLNEFKGHFDTVIDIGCFHSILNSDHEPHTASLSHICHSDSSVFLRAFSETNKSRYRRWQGHKRYSLALKRNNVKKLSL</sequence>
<gene>
    <name type="ORF">SPAC977.03</name>
</gene>
<proteinExistence type="inferred from homology"/>
<name>YI73_SCHPO</name>
<reference key="1">
    <citation type="journal article" date="2002" name="Nature">
        <title>The genome sequence of Schizosaccharomyces pombe.</title>
        <authorList>
            <person name="Wood V."/>
            <person name="Gwilliam R."/>
            <person name="Rajandream M.A."/>
            <person name="Lyne M.H."/>
            <person name="Lyne R."/>
            <person name="Stewart A."/>
            <person name="Sgouros J.G."/>
            <person name="Peat N."/>
            <person name="Hayles J."/>
            <person name="Baker S.G."/>
            <person name="Basham D."/>
            <person name="Bowman S."/>
            <person name="Brooks K."/>
            <person name="Brown D."/>
            <person name="Brown S."/>
            <person name="Chillingworth T."/>
            <person name="Churcher C.M."/>
            <person name="Collins M."/>
            <person name="Connor R."/>
            <person name="Cronin A."/>
            <person name="Davis P."/>
            <person name="Feltwell T."/>
            <person name="Fraser A."/>
            <person name="Gentles S."/>
            <person name="Goble A."/>
            <person name="Hamlin N."/>
            <person name="Harris D.E."/>
            <person name="Hidalgo J."/>
            <person name="Hodgson G."/>
            <person name="Holroyd S."/>
            <person name="Hornsby T."/>
            <person name="Howarth S."/>
            <person name="Huckle E.J."/>
            <person name="Hunt S."/>
            <person name="Jagels K."/>
            <person name="James K.D."/>
            <person name="Jones L."/>
            <person name="Jones M."/>
            <person name="Leather S."/>
            <person name="McDonald S."/>
            <person name="McLean J."/>
            <person name="Mooney P."/>
            <person name="Moule S."/>
            <person name="Mungall K.L."/>
            <person name="Murphy L.D."/>
            <person name="Niblett D."/>
            <person name="Odell C."/>
            <person name="Oliver K."/>
            <person name="O'Neil S."/>
            <person name="Pearson D."/>
            <person name="Quail M.A."/>
            <person name="Rabbinowitsch E."/>
            <person name="Rutherford K.M."/>
            <person name="Rutter S."/>
            <person name="Saunders D."/>
            <person name="Seeger K."/>
            <person name="Sharp S."/>
            <person name="Skelton J."/>
            <person name="Simmonds M.N."/>
            <person name="Squares R."/>
            <person name="Squares S."/>
            <person name="Stevens K."/>
            <person name="Taylor K."/>
            <person name="Taylor R.G."/>
            <person name="Tivey A."/>
            <person name="Walsh S.V."/>
            <person name="Warren T."/>
            <person name="Whitehead S."/>
            <person name="Woodward J.R."/>
            <person name="Volckaert G."/>
            <person name="Aert R."/>
            <person name="Robben J."/>
            <person name="Grymonprez B."/>
            <person name="Weltjens I."/>
            <person name="Vanstreels E."/>
            <person name="Rieger M."/>
            <person name="Schaefer M."/>
            <person name="Mueller-Auer S."/>
            <person name="Gabel C."/>
            <person name="Fuchs M."/>
            <person name="Duesterhoeft A."/>
            <person name="Fritzc C."/>
            <person name="Holzer E."/>
            <person name="Moestl D."/>
            <person name="Hilbert H."/>
            <person name="Borzym K."/>
            <person name="Langer I."/>
            <person name="Beck A."/>
            <person name="Lehrach H."/>
            <person name="Reinhardt R."/>
            <person name="Pohl T.M."/>
            <person name="Eger P."/>
            <person name="Zimmermann W."/>
            <person name="Wedler H."/>
            <person name="Wambutt R."/>
            <person name="Purnelle B."/>
            <person name="Goffeau A."/>
            <person name="Cadieu E."/>
            <person name="Dreano S."/>
            <person name="Gloux S."/>
            <person name="Lelaure V."/>
            <person name="Mottier S."/>
            <person name="Galibert F."/>
            <person name="Aves S.J."/>
            <person name="Xiang Z."/>
            <person name="Hunt C."/>
            <person name="Moore K."/>
            <person name="Hurst S.M."/>
            <person name="Lucas M."/>
            <person name="Rochet M."/>
            <person name="Gaillardin C."/>
            <person name="Tallada V.A."/>
            <person name="Garzon A."/>
            <person name="Thode G."/>
            <person name="Daga R.R."/>
            <person name="Cruzado L."/>
            <person name="Jimenez J."/>
            <person name="Sanchez M."/>
            <person name="del Rey F."/>
            <person name="Benito J."/>
            <person name="Dominguez A."/>
            <person name="Revuelta J.L."/>
            <person name="Moreno S."/>
            <person name="Armstrong J."/>
            <person name="Forsburg S.L."/>
            <person name="Cerutti L."/>
            <person name="Lowe T."/>
            <person name="McCombie W.R."/>
            <person name="Paulsen I."/>
            <person name="Potashkin J."/>
            <person name="Shpakovski G.V."/>
            <person name="Ussery D."/>
            <person name="Barrell B.G."/>
            <person name="Nurse P."/>
        </authorList>
    </citation>
    <scope>NUCLEOTIDE SEQUENCE [LARGE SCALE GENOMIC DNA]</scope>
    <source>
        <strain>972 / ATCC 24843</strain>
    </source>
</reference>